<organism>
    <name type="scientific">Rickettsia canadensis (strain McKiel)</name>
    <dbReference type="NCBI Taxonomy" id="293613"/>
    <lineage>
        <taxon>Bacteria</taxon>
        <taxon>Pseudomonadati</taxon>
        <taxon>Pseudomonadota</taxon>
        <taxon>Alphaproteobacteria</taxon>
        <taxon>Rickettsiales</taxon>
        <taxon>Rickettsiaceae</taxon>
        <taxon>Rickettsieae</taxon>
        <taxon>Rickettsia</taxon>
        <taxon>belli group</taxon>
    </lineage>
</organism>
<dbReference type="EMBL" id="CP000409">
    <property type="protein sequence ID" value="ABV73793.1"/>
    <property type="molecule type" value="Genomic_DNA"/>
</dbReference>
<dbReference type="RefSeq" id="WP_012148988.1">
    <property type="nucleotide sequence ID" value="NC_009879.1"/>
</dbReference>
<dbReference type="SMR" id="A8EZL0"/>
<dbReference type="STRING" id="293613.A1E_04340"/>
<dbReference type="KEGG" id="rcm:A1E_04340"/>
<dbReference type="eggNOG" id="COG0092">
    <property type="taxonomic scope" value="Bacteria"/>
</dbReference>
<dbReference type="HOGENOM" id="CLU_058591_0_2_5"/>
<dbReference type="Proteomes" id="UP000007056">
    <property type="component" value="Chromosome"/>
</dbReference>
<dbReference type="GO" id="GO:0022627">
    <property type="term" value="C:cytosolic small ribosomal subunit"/>
    <property type="evidence" value="ECO:0007669"/>
    <property type="project" value="TreeGrafter"/>
</dbReference>
<dbReference type="GO" id="GO:0003729">
    <property type="term" value="F:mRNA binding"/>
    <property type="evidence" value="ECO:0007669"/>
    <property type="project" value="UniProtKB-UniRule"/>
</dbReference>
<dbReference type="GO" id="GO:0019843">
    <property type="term" value="F:rRNA binding"/>
    <property type="evidence" value="ECO:0007669"/>
    <property type="project" value="UniProtKB-UniRule"/>
</dbReference>
<dbReference type="GO" id="GO:0003735">
    <property type="term" value="F:structural constituent of ribosome"/>
    <property type="evidence" value="ECO:0007669"/>
    <property type="project" value="InterPro"/>
</dbReference>
<dbReference type="GO" id="GO:0006412">
    <property type="term" value="P:translation"/>
    <property type="evidence" value="ECO:0007669"/>
    <property type="project" value="UniProtKB-UniRule"/>
</dbReference>
<dbReference type="CDD" id="cd02412">
    <property type="entry name" value="KH-II_30S_S3"/>
    <property type="match status" value="1"/>
</dbReference>
<dbReference type="FunFam" id="3.30.300.20:FF:000001">
    <property type="entry name" value="30S ribosomal protein S3"/>
    <property type="match status" value="1"/>
</dbReference>
<dbReference type="Gene3D" id="3.30.300.20">
    <property type="match status" value="1"/>
</dbReference>
<dbReference type="Gene3D" id="3.30.1140.32">
    <property type="entry name" value="Ribosomal protein S3, C-terminal domain"/>
    <property type="match status" value="1"/>
</dbReference>
<dbReference type="HAMAP" id="MF_01309_B">
    <property type="entry name" value="Ribosomal_uS3_B"/>
    <property type="match status" value="1"/>
</dbReference>
<dbReference type="InterPro" id="IPR004087">
    <property type="entry name" value="KH_dom"/>
</dbReference>
<dbReference type="InterPro" id="IPR015946">
    <property type="entry name" value="KH_dom-like_a/b"/>
</dbReference>
<dbReference type="InterPro" id="IPR004044">
    <property type="entry name" value="KH_dom_type_2"/>
</dbReference>
<dbReference type="InterPro" id="IPR009019">
    <property type="entry name" value="KH_sf_prok-type"/>
</dbReference>
<dbReference type="InterPro" id="IPR036419">
    <property type="entry name" value="Ribosomal_S3_C_sf"/>
</dbReference>
<dbReference type="InterPro" id="IPR005704">
    <property type="entry name" value="Ribosomal_uS3_bac-typ"/>
</dbReference>
<dbReference type="InterPro" id="IPR001351">
    <property type="entry name" value="Ribosomal_uS3_C"/>
</dbReference>
<dbReference type="InterPro" id="IPR018280">
    <property type="entry name" value="Ribosomal_uS3_CS"/>
</dbReference>
<dbReference type="NCBIfam" id="TIGR01009">
    <property type="entry name" value="rpsC_bact"/>
    <property type="match status" value="1"/>
</dbReference>
<dbReference type="PANTHER" id="PTHR11760">
    <property type="entry name" value="30S/40S RIBOSOMAL PROTEIN S3"/>
    <property type="match status" value="1"/>
</dbReference>
<dbReference type="PANTHER" id="PTHR11760:SF19">
    <property type="entry name" value="SMALL RIBOSOMAL SUBUNIT PROTEIN US3C"/>
    <property type="match status" value="1"/>
</dbReference>
<dbReference type="Pfam" id="PF07650">
    <property type="entry name" value="KH_2"/>
    <property type="match status" value="1"/>
</dbReference>
<dbReference type="Pfam" id="PF00189">
    <property type="entry name" value="Ribosomal_S3_C"/>
    <property type="match status" value="1"/>
</dbReference>
<dbReference type="SMART" id="SM00322">
    <property type="entry name" value="KH"/>
    <property type="match status" value="1"/>
</dbReference>
<dbReference type="SUPFAM" id="SSF54814">
    <property type="entry name" value="Prokaryotic type KH domain (KH-domain type II)"/>
    <property type="match status" value="1"/>
</dbReference>
<dbReference type="SUPFAM" id="SSF54821">
    <property type="entry name" value="Ribosomal protein S3 C-terminal domain"/>
    <property type="match status" value="1"/>
</dbReference>
<dbReference type="PROSITE" id="PS50823">
    <property type="entry name" value="KH_TYPE_2"/>
    <property type="match status" value="1"/>
</dbReference>
<dbReference type="PROSITE" id="PS00548">
    <property type="entry name" value="RIBOSOMAL_S3"/>
    <property type="match status" value="1"/>
</dbReference>
<evidence type="ECO:0000255" key="1">
    <source>
        <dbReference type="HAMAP-Rule" id="MF_01309"/>
    </source>
</evidence>
<evidence type="ECO:0000305" key="2"/>
<name>RS3_RICCK</name>
<sequence length="217" mass="24593">MGQKVCAHGFRVGPTLIKGWDSVLYAEKHYKTLFIQDLKIRDLINNSFNQAQISRVLIERPSNKSIIININAKKPNVIIGRSGNEIDKLKKAIEKMTYLQEVYINIHEVRKFNIDAAIVAQTIALQLEKRVSFRKAMKTAIQASFKQGGQGIRVSCSGRLGGAEIARTEWYIEGRMPLHTLRADIDYSTAEAITTYGVIGVKVWIYKGEYTANKRYN</sequence>
<proteinExistence type="inferred from homology"/>
<reference key="1">
    <citation type="submission" date="2007-09" db="EMBL/GenBank/DDBJ databases">
        <title>Complete genome sequence of Rickettsia canadensis.</title>
        <authorList>
            <person name="Madan A."/>
            <person name="Fahey J."/>
            <person name="Helton E."/>
            <person name="Ketteman M."/>
            <person name="Madan A."/>
            <person name="Rodrigues S."/>
            <person name="Sanchez A."/>
            <person name="Whiting M."/>
            <person name="Dasch G."/>
            <person name="Eremeeva M."/>
        </authorList>
    </citation>
    <scope>NUCLEOTIDE SEQUENCE [LARGE SCALE GENOMIC DNA]</scope>
    <source>
        <strain>McKiel</strain>
    </source>
</reference>
<keyword id="KW-0687">Ribonucleoprotein</keyword>
<keyword id="KW-0689">Ribosomal protein</keyword>
<keyword id="KW-0694">RNA-binding</keyword>
<keyword id="KW-0699">rRNA-binding</keyword>
<accession>A8EZL0</accession>
<comment type="function">
    <text evidence="1">Binds the lower part of the 30S subunit head. Binds mRNA in the 70S ribosome, positioning it for translation.</text>
</comment>
<comment type="subunit">
    <text evidence="1">Part of the 30S ribosomal subunit. Forms a tight complex with proteins S10 and S14.</text>
</comment>
<comment type="similarity">
    <text evidence="1">Belongs to the universal ribosomal protein uS3 family.</text>
</comment>
<protein>
    <recommendedName>
        <fullName evidence="1">Small ribosomal subunit protein uS3</fullName>
    </recommendedName>
    <alternativeName>
        <fullName evidence="2">30S ribosomal protein S3</fullName>
    </alternativeName>
</protein>
<gene>
    <name evidence="1" type="primary">rpsC</name>
    <name type="ordered locus">A1E_04340</name>
</gene>
<feature type="chain" id="PRO_1000086149" description="Small ribosomal subunit protein uS3">
    <location>
        <begin position="1"/>
        <end position="217"/>
    </location>
</feature>
<feature type="domain" description="KH type-2" evidence="1">
    <location>
        <begin position="40"/>
        <end position="110"/>
    </location>
</feature>